<comment type="similarity">
    <text evidence="1">Belongs to the universal ribosomal protein uS2 family.</text>
</comment>
<protein>
    <recommendedName>
        <fullName evidence="1">Small ribosomal subunit protein uS2</fullName>
    </recommendedName>
    <alternativeName>
        <fullName evidence="3">30S ribosomal protein S2</fullName>
    </alternativeName>
</protein>
<keyword id="KW-0687">Ribonucleoprotein</keyword>
<keyword id="KW-0689">Ribosomal protein</keyword>
<dbReference type="EMBL" id="CP000061">
    <property type="protein sequence ID" value="ABC65671.1"/>
    <property type="molecule type" value="Genomic_DNA"/>
</dbReference>
<dbReference type="RefSeq" id="WP_011412833.1">
    <property type="nucleotide sequence ID" value="NC_007716.1"/>
</dbReference>
<dbReference type="SMR" id="Q2NIS2"/>
<dbReference type="STRING" id="322098.AYWB_554"/>
<dbReference type="KEGG" id="ayw:AYWB_554"/>
<dbReference type="eggNOG" id="COG0052">
    <property type="taxonomic scope" value="Bacteria"/>
</dbReference>
<dbReference type="HOGENOM" id="CLU_040318_1_2_14"/>
<dbReference type="OrthoDB" id="9808036at2"/>
<dbReference type="PhylomeDB" id="Q2NIS2"/>
<dbReference type="Proteomes" id="UP000001934">
    <property type="component" value="Chromosome"/>
</dbReference>
<dbReference type="GO" id="GO:0022627">
    <property type="term" value="C:cytosolic small ribosomal subunit"/>
    <property type="evidence" value="ECO:0007669"/>
    <property type="project" value="TreeGrafter"/>
</dbReference>
<dbReference type="GO" id="GO:0003735">
    <property type="term" value="F:structural constituent of ribosome"/>
    <property type="evidence" value="ECO:0007669"/>
    <property type="project" value="InterPro"/>
</dbReference>
<dbReference type="GO" id="GO:0006412">
    <property type="term" value="P:translation"/>
    <property type="evidence" value="ECO:0007669"/>
    <property type="project" value="UniProtKB-UniRule"/>
</dbReference>
<dbReference type="CDD" id="cd01425">
    <property type="entry name" value="RPS2"/>
    <property type="match status" value="1"/>
</dbReference>
<dbReference type="FunFam" id="1.10.287.610:FF:000001">
    <property type="entry name" value="30S ribosomal protein S2"/>
    <property type="match status" value="1"/>
</dbReference>
<dbReference type="Gene3D" id="3.40.50.10490">
    <property type="entry name" value="Glucose-6-phosphate isomerase like protein, domain 1"/>
    <property type="match status" value="1"/>
</dbReference>
<dbReference type="Gene3D" id="1.10.287.610">
    <property type="entry name" value="Helix hairpin bin"/>
    <property type="match status" value="1"/>
</dbReference>
<dbReference type="HAMAP" id="MF_00291_B">
    <property type="entry name" value="Ribosomal_uS2_B"/>
    <property type="match status" value="1"/>
</dbReference>
<dbReference type="InterPro" id="IPR001865">
    <property type="entry name" value="Ribosomal_uS2"/>
</dbReference>
<dbReference type="InterPro" id="IPR005706">
    <property type="entry name" value="Ribosomal_uS2_bac/mit/plastid"/>
</dbReference>
<dbReference type="InterPro" id="IPR023591">
    <property type="entry name" value="Ribosomal_uS2_flav_dom_sf"/>
</dbReference>
<dbReference type="NCBIfam" id="TIGR01011">
    <property type="entry name" value="rpsB_bact"/>
    <property type="match status" value="1"/>
</dbReference>
<dbReference type="PANTHER" id="PTHR12534">
    <property type="entry name" value="30S RIBOSOMAL PROTEIN S2 PROKARYOTIC AND ORGANELLAR"/>
    <property type="match status" value="1"/>
</dbReference>
<dbReference type="PANTHER" id="PTHR12534:SF0">
    <property type="entry name" value="SMALL RIBOSOMAL SUBUNIT PROTEIN US2M"/>
    <property type="match status" value="1"/>
</dbReference>
<dbReference type="Pfam" id="PF00318">
    <property type="entry name" value="Ribosomal_S2"/>
    <property type="match status" value="1"/>
</dbReference>
<dbReference type="PRINTS" id="PR00395">
    <property type="entry name" value="RIBOSOMALS2"/>
</dbReference>
<dbReference type="SUPFAM" id="SSF52313">
    <property type="entry name" value="Ribosomal protein S2"/>
    <property type="match status" value="1"/>
</dbReference>
<proteinExistence type="inferred from homology"/>
<reference key="1">
    <citation type="journal article" date="2006" name="J. Bacteriol.">
        <title>Living with genome instability: the adaptation of phytoplasmas to diverse environments of their insect and plant hosts.</title>
        <authorList>
            <person name="Bai X."/>
            <person name="Zhang J."/>
            <person name="Ewing A."/>
            <person name="Miller S.A."/>
            <person name="Jancso Radek A."/>
            <person name="Shevchenko D.V."/>
            <person name="Tsukerman K."/>
            <person name="Walunas T."/>
            <person name="Lapidus A."/>
            <person name="Campbell J.W."/>
            <person name="Hogenhout S.A."/>
        </authorList>
    </citation>
    <scope>NUCLEOTIDE SEQUENCE [LARGE SCALE GENOMIC DNA]</scope>
    <source>
        <strain>AYWB</strain>
    </source>
</reference>
<feature type="chain" id="PRO_1000003888" description="Small ribosomal subunit protein uS2">
    <location>
        <begin position="1"/>
        <end position="269"/>
    </location>
</feature>
<feature type="region of interest" description="Disordered" evidence="2">
    <location>
        <begin position="235"/>
        <end position="269"/>
    </location>
</feature>
<evidence type="ECO:0000255" key="1">
    <source>
        <dbReference type="HAMAP-Rule" id="MF_00291"/>
    </source>
</evidence>
<evidence type="ECO:0000256" key="2">
    <source>
        <dbReference type="SAM" id="MobiDB-lite"/>
    </source>
</evidence>
<evidence type="ECO:0000305" key="3"/>
<gene>
    <name evidence="1" type="primary">rpsB</name>
    <name type="ordered locus">AYWB_554</name>
</gene>
<accession>Q2NIS2</accession>
<organism>
    <name type="scientific">Aster yellows witches'-broom phytoplasma (strain AYWB)</name>
    <dbReference type="NCBI Taxonomy" id="322098"/>
    <lineage>
        <taxon>Bacteria</taxon>
        <taxon>Bacillati</taxon>
        <taxon>Mycoplasmatota</taxon>
        <taxon>Mollicutes</taxon>
        <taxon>Acholeplasmatales</taxon>
        <taxon>Acholeplasmataceae</taxon>
        <taxon>Candidatus Phytoplasma</taxon>
        <taxon>16SrI (Aster yellows group)</taxon>
    </lineage>
</organism>
<sequence>MAVVTTKQLLESGVYFGHATRKWNPKMKPYIFTSRNGIHIINLKKTSEEIEKAYQELLNIITSGGKALFLGTKKQIQSSIREEAQRSQQYYVDHRWLGGTLTNFKTILKRIELLHLLHKQEEEGLWKKLPKKEVVKLKRKRDKLEKFLGGIKDMKNLPQAIFIFDPEKESIAVAEARKLGIKVFGIVDTNCDPDLVDYIIPANDDAIRGVKLIIWLMANACVQGNGGVAEKAETFDAKNPLKPQNYNTLNKRPYQDSPRKPSYQNQNQR</sequence>
<name>RS2_AYWBP</name>